<dbReference type="EMBL" id="AE016825">
    <property type="protein sequence ID" value="AAQ61093.1"/>
    <property type="molecule type" value="Genomic_DNA"/>
</dbReference>
<dbReference type="RefSeq" id="WP_011136977.1">
    <property type="nucleotide sequence ID" value="NC_005085.1"/>
</dbReference>
<dbReference type="SMR" id="Q7NSJ4"/>
<dbReference type="STRING" id="243365.CV_3430"/>
<dbReference type="KEGG" id="cvi:CV_3430"/>
<dbReference type="eggNOG" id="COG0509">
    <property type="taxonomic scope" value="Bacteria"/>
</dbReference>
<dbReference type="HOGENOM" id="CLU_097408_2_0_4"/>
<dbReference type="OrthoDB" id="9796712at2"/>
<dbReference type="Proteomes" id="UP000001424">
    <property type="component" value="Chromosome"/>
</dbReference>
<dbReference type="GO" id="GO:0005829">
    <property type="term" value="C:cytosol"/>
    <property type="evidence" value="ECO:0007669"/>
    <property type="project" value="TreeGrafter"/>
</dbReference>
<dbReference type="GO" id="GO:0005960">
    <property type="term" value="C:glycine cleavage complex"/>
    <property type="evidence" value="ECO:0007669"/>
    <property type="project" value="InterPro"/>
</dbReference>
<dbReference type="GO" id="GO:0019464">
    <property type="term" value="P:glycine decarboxylation via glycine cleavage system"/>
    <property type="evidence" value="ECO:0007669"/>
    <property type="project" value="UniProtKB-UniRule"/>
</dbReference>
<dbReference type="CDD" id="cd06848">
    <property type="entry name" value="GCS_H"/>
    <property type="match status" value="1"/>
</dbReference>
<dbReference type="Gene3D" id="2.40.50.100">
    <property type="match status" value="1"/>
</dbReference>
<dbReference type="HAMAP" id="MF_00272">
    <property type="entry name" value="GcvH"/>
    <property type="match status" value="1"/>
</dbReference>
<dbReference type="InterPro" id="IPR003016">
    <property type="entry name" value="2-oxoA_DH_lipoyl-BS"/>
</dbReference>
<dbReference type="InterPro" id="IPR000089">
    <property type="entry name" value="Biotin_lipoyl"/>
</dbReference>
<dbReference type="InterPro" id="IPR002930">
    <property type="entry name" value="GCV_H"/>
</dbReference>
<dbReference type="InterPro" id="IPR033753">
    <property type="entry name" value="GCV_H/Fam206"/>
</dbReference>
<dbReference type="InterPro" id="IPR017453">
    <property type="entry name" value="GCV_H_sub"/>
</dbReference>
<dbReference type="InterPro" id="IPR011053">
    <property type="entry name" value="Single_hybrid_motif"/>
</dbReference>
<dbReference type="NCBIfam" id="TIGR00527">
    <property type="entry name" value="gcvH"/>
    <property type="match status" value="1"/>
</dbReference>
<dbReference type="NCBIfam" id="NF002270">
    <property type="entry name" value="PRK01202.1"/>
    <property type="match status" value="1"/>
</dbReference>
<dbReference type="PANTHER" id="PTHR11715">
    <property type="entry name" value="GLYCINE CLEAVAGE SYSTEM H PROTEIN"/>
    <property type="match status" value="1"/>
</dbReference>
<dbReference type="PANTHER" id="PTHR11715:SF3">
    <property type="entry name" value="GLYCINE CLEAVAGE SYSTEM H PROTEIN-RELATED"/>
    <property type="match status" value="1"/>
</dbReference>
<dbReference type="Pfam" id="PF01597">
    <property type="entry name" value="GCV_H"/>
    <property type="match status" value="1"/>
</dbReference>
<dbReference type="SUPFAM" id="SSF51230">
    <property type="entry name" value="Single hybrid motif"/>
    <property type="match status" value="1"/>
</dbReference>
<dbReference type="PROSITE" id="PS50968">
    <property type="entry name" value="BIOTINYL_LIPOYL"/>
    <property type="match status" value="1"/>
</dbReference>
<dbReference type="PROSITE" id="PS00189">
    <property type="entry name" value="LIPOYL"/>
    <property type="match status" value="1"/>
</dbReference>
<protein>
    <recommendedName>
        <fullName evidence="1">Glycine cleavage system H protein</fullName>
    </recommendedName>
</protein>
<feature type="chain" id="PRO_0000302366" description="Glycine cleavage system H protein">
    <location>
        <begin position="1"/>
        <end position="128"/>
    </location>
</feature>
<feature type="domain" description="Lipoyl-binding" evidence="2">
    <location>
        <begin position="24"/>
        <end position="106"/>
    </location>
</feature>
<feature type="modified residue" description="N6-lipoyllysine" evidence="1">
    <location>
        <position position="65"/>
    </location>
</feature>
<name>GCSH_CHRVO</name>
<sequence length="128" mass="13518">MSNIPAELKYVDSHEWLRLEADGSVTVGITAHAQELLGDIVFVELPKVGASLAKDEQAGVVESVKAASDVYCPIAGEVLAVNEELEGEPELANSDPYGDGWFFKIKPANAADLNGLMDAAAYAKEIGA</sequence>
<evidence type="ECO:0000255" key="1">
    <source>
        <dbReference type="HAMAP-Rule" id="MF_00272"/>
    </source>
</evidence>
<evidence type="ECO:0000255" key="2">
    <source>
        <dbReference type="PROSITE-ProRule" id="PRU01066"/>
    </source>
</evidence>
<gene>
    <name evidence="1" type="primary">gcvH</name>
    <name type="ordered locus">CV_3430</name>
</gene>
<reference key="1">
    <citation type="journal article" date="2003" name="Proc. Natl. Acad. Sci. U.S.A.">
        <title>The complete genome sequence of Chromobacterium violaceum reveals remarkable and exploitable bacterial adaptability.</title>
        <authorList>
            <person name="Vasconcelos A.T.R."/>
            <person name="de Almeida D.F."/>
            <person name="Hungria M."/>
            <person name="Guimaraes C.T."/>
            <person name="Antonio R.V."/>
            <person name="Almeida F.C."/>
            <person name="de Almeida L.G.P."/>
            <person name="de Almeida R."/>
            <person name="Alves-Gomes J.A."/>
            <person name="Andrade E.M."/>
            <person name="Araripe J."/>
            <person name="de Araujo M.F.F."/>
            <person name="Astolfi-Filho S."/>
            <person name="Azevedo V."/>
            <person name="Baptista A.J."/>
            <person name="Bataus L.A.M."/>
            <person name="Batista J.S."/>
            <person name="Belo A."/>
            <person name="van den Berg C."/>
            <person name="Bogo M."/>
            <person name="Bonatto S."/>
            <person name="Bordignon J."/>
            <person name="Brigido M.M."/>
            <person name="Brito C.A."/>
            <person name="Brocchi M."/>
            <person name="Burity H.A."/>
            <person name="Camargo A.A."/>
            <person name="Cardoso D.D.P."/>
            <person name="Carneiro N.P."/>
            <person name="Carraro D.M."/>
            <person name="Carvalho C.M.B."/>
            <person name="Cascardo J.C.M."/>
            <person name="Cavada B.S."/>
            <person name="Chueire L.M.O."/>
            <person name="Creczynski-Pasa T.B."/>
            <person name="Cunha-Junior N.C."/>
            <person name="Fagundes N."/>
            <person name="Falcao C.L."/>
            <person name="Fantinatti F."/>
            <person name="Farias I.P."/>
            <person name="Felipe M.S.S."/>
            <person name="Ferrari L.P."/>
            <person name="Ferro J.A."/>
            <person name="Ferro M.I.T."/>
            <person name="Franco G.R."/>
            <person name="Freitas N.S.A."/>
            <person name="Furlan L.R."/>
            <person name="Gazzinelli R.T."/>
            <person name="Gomes E.A."/>
            <person name="Goncalves P.R."/>
            <person name="Grangeiro T.B."/>
            <person name="Grattapaglia D."/>
            <person name="Grisard E.C."/>
            <person name="Hanna E.S."/>
            <person name="Jardim S.N."/>
            <person name="Laurino J."/>
            <person name="Leoi L.C.T."/>
            <person name="Lima L.F.A."/>
            <person name="Loureiro M.F."/>
            <person name="Lyra M.C.C.P."/>
            <person name="Madeira H.M.F."/>
            <person name="Manfio G.P."/>
            <person name="Maranhao A.Q."/>
            <person name="Martins W.S."/>
            <person name="di Mauro S.M.Z."/>
            <person name="de Medeiros S.R.B."/>
            <person name="Meissner R.V."/>
            <person name="Moreira M.A.M."/>
            <person name="Nascimento F.F."/>
            <person name="Nicolas M.F."/>
            <person name="Oliveira J.G."/>
            <person name="Oliveira S.C."/>
            <person name="Paixao R.F.C."/>
            <person name="Parente J.A."/>
            <person name="Pedrosa F.O."/>
            <person name="Pena S.D.J."/>
            <person name="Pereira J.O."/>
            <person name="Pereira M."/>
            <person name="Pinto L.S.R.C."/>
            <person name="Pinto L.S."/>
            <person name="Porto J.I.R."/>
            <person name="Potrich D.P."/>
            <person name="Ramalho-Neto C.E."/>
            <person name="Reis A.M.M."/>
            <person name="Rigo L.U."/>
            <person name="Rondinelli E."/>
            <person name="Santos E.B.P."/>
            <person name="Santos F.R."/>
            <person name="Schneider M.P.C."/>
            <person name="Seuanez H.N."/>
            <person name="Silva A.M.R."/>
            <person name="da Silva A.L.C."/>
            <person name="Silva D.W."/>
            <person name="Silva R."/>
            <person name="Simoes I.C."/>
            <person name="Simon D."/>
            <person name="Soares C.M.A."/>
            <person name="Soares R.B.A."/>
            <person name="Souza E.M."/>
            <person name="Souza K.R.L."/>
            <person name="Souza R.C."/>
            <person name="Steffens M.B.R."/>
            <person name="Steindel M."/>
            <person name="Teixeira S.R."/>
            <person name="Urmenyi T."/>
            <person name="Vettore A."/>
            <person name="Wassem R."/>
            <person name="Zaha A."/>
            <person name="Simpson A.J.G."/>
        </authorList>
    </citation>
    <scope>NUCLEOTIDE SEQUENCE [LARGE SCALE GENOMIC DNA]</scope>
    <source>
        <strain>ATCC 12472 / DSM 30191 / JCM 1249 / CCUG 213 / NBRC 12614 / NCIMB 9131 / NCTC 9757 / MK</strain>
    </source>
</reference>
<comment type="function">
    <text evidence="1">The glycine cleavage system catalyzes the degradation of glycine. The H protein shuttles the methylamine group of glycine from the P protein to the T protein.</text>
</comment>
<comment type="cofactor">
    <cofactor evidence="1">
        <name>(R)-lipoate</name>
        <dbReference type="ChEBI" id="CHEBI:83088"/>
    </cofactor>
    <text evidence="1">Binds 1 lipoyl cofactor covalently.</text>
</comment>
<comment type="subunit">
    <text evidence="1">The glycine cleavage system is composed of four proteins: P, T, L and H.</text>
</comment>
<comment type="similarity">
    <text evidence="1">Belongs to the GcvH family.</text>
</comment>
<keyword id="KW-0450">Lipoyl</keyword>
<keyword id="KW-1185">Reference proteome</keyword>
<accession>Q7NSJ4</accession>
<proteinExistence type="inferred from homology"/>
<organism>
    <name type="scientific">Chromobacterium violaceum (strain ATCC 12472 / DSM 30191 / JCM 1249 / CCUG 213 / NBRC 12614 / NCIMB 9131 / NCTC 9757 / MK)</name>
    <dbReference type="NCBI Taxonomy" id="243365"/>
    <lineage>
        <taxon>Bacteria</taxon>
        <taxon>Pseudomonadati</taxon>
        <taxon>Pseudomonadota</taxon>
        <taxon>Betaproteobacteria</taxon>
        <taxon>Neisseriales</taxon>
        <taxon>Chromobacteriaceae</taxon>
        <taxon>Chromobacterium</taxon>
    </lineage>
</organism>